<evidence type="ECO:0000255" key="1">
    <source>
        <dbReference type="HAMAP-Rule" id="MF_01321"/>
    </source>
</evidence>
<reference key="1">
    <citation type="submission" date="2007-03" db="EMBL/GenBank/DDBJ databases">
        <title>Sequencing analysis of Arabis hirsuta chloroplast DNA.</title>
        <authorList>
            <person name="Hosouchi T."/>
            <person name="Tsuruoka H."/>
            <person name="Kotani H."/>
        </authorList>
    </citation>
    <scope>NUCLEOTIDE SEQUENCE [LARGE SCALE GENOMIC DNA]</scope>
</reference>
<geneLocation type="chloroplast"/>
<protein>
    <recommendedName>
        <fullName evidence="1">DNA-directed RNA polymerase subunit beta</fullName>
        <ecNumber evidence="1">2.7.7.6</ecNumber>
    </recommendedName>
    <alternativeName>
        <fullName evidence="1">PEP</fullName>
    </alternativeName>
    <alternativeName>
        <fullName evidence="1">Plastid-encoded RNA polymerase subunit beta</fullName>
        <shortName evidence="1">RNA polymerase subunit beta</shortName>
    </alternativeName>
</protein>
<name>RPOB_ARAHI</name>
<organism>
    <name type="scientific">Arabis hirsuta</name>
    <name type="common">Hairy rock-cress</name>
    <name type="synonym">Turritis hirsuta</name>
    <dbReference type="NCBI Taxonomy" id="78191"/>
    <lineage>
        <taxon>Eukaryota</taxon>
        <taxon>Viridiplantae</taxon>
        <taxon>Streptophyta</taxon>
        <taxon>Embryophyta</taxon>
        <taxon>Tracheophyta</taxon>
        <taxon>Spermatophyta</taxon>
        <taxon>Magnoliopsida</taxon>
        <taxon>eudicotyledons</taxon>
        <taxon>Gunneridae</taxon>
        <taxon>Pentapetalae</taxon>
        <taxon>rosids</taxon>
        <taxon>malvids</taxon>
        <taxon>Brassicales</taxon>
        <taxon>Brassicaceae</taxon>
        <taxon>Arabideae</taxon>
        <taxon>Arabis</taxon>
    </lineage>
</organism>
<keyword id="KW-0150">Chloroplast</keyword>
<keyword id="KW-0240">DNA-directed RNA polymerase</keyword>
<keyword id="KW-0548">Nucleotidyltransferase</keyword>
<keyword id="KW-0934">Plastid</keyword>
<keyword id="KW-0804">Transcription</keyword>
<keyword id="KW-0808">Transferase</keyword>
<feature type="chain" id="PRO_0000300432" description="DNA-directed RNA polymerase subunit beta">
    <location>
        <begin position="1"/>
        <end position="1072"/>
    </location>
</feature>
<proteinExistence type="inferred from homology"/>
<accession>A4QK10</accession>
<sequence>MLGDGKEGTSTIPGFNQIQFEGFYRFIDQGLIEELSKFPKIEDIDHEIEFQLFVETYQLVEPLIKERDAVYESLTYSSELYVSAGLIWKTSRNMQEQRIFIGNIPLMNSLGISIVNGIYRIVINQILQSPGIYYQSELDHNGISVYTGTIISDWGGRLELEIDKKARIWARVSRKQKISILVLSSAMGSNLREILENVCYPEIFLSFLTDKEKKKIGSKENAILEFYQQFSCVGGDPIFSESLCKELQKKFFHQRCELGRIGRRNINWRLNLNIPQNNIFLLPRDILAAADHLIGMKFGMGTLDDMNHLKNKRIRSVADLLQDQLGLALARLENVVKGTIGGAIRHKLIPTPQNLVTSTPLTTTYESFFGLHPLSQVLDRTNPLTQIVHGRKLSYLGPGGLTGRTANFRIRDIHPSHYGRICPIDTSEGINVGLIGSLSIHARIGDWGSLESPFYELFEKSKEARIRMLFLSPSQDEYYMIAAGNSLALNRDIQEEQAVPARYRQEFLTIAWEEVNLRSIFPFQYFSIGASLIPFIEHNDANRALMSSNMQRQAVPLSRSEKCIVGTGLERQVALDSGVPAIAEHEGKILSTDTEKIILSGDGNTISIPLIMYQRSNKNTCMHQKPQVRRGKCIKKGQILADGAATVGGELALGKNILVAYMPWEGYNFEDAVLISECLVYGDIYTSFHIRKYEIQTHVTTQGPERITKEIPHLEGRLLRNLDKNGIVMLGSWVETGDILVGKLTPQVAKESSYAPEDRLLRAILGIQVSTSKETCLKLPIGGRGRVIDVRWVQKKGGTSYNPEIIRVYISQKREIKVGDKVAGRHGNKGIISKILPRQDMPYLQDGRPVDMVFNPLGVPSRMNVGQIFECSLGLAGSLLDRHYRIAPFDERYEQEASRKLVFSELYEASKQTANPWVFEPEYPGKSRIFDGRTGDPFEQPVIIGKPYILKLIHQVDDKIHGRSSGHYALVTQQPLRGRSKQGGQRVGEMEVWALEGFGVAHILQEMLTYKSDHIRARQEVLGTTIIGGTIPKPEDAPESFRLLVRELRSLALELNHFLVSEKNFQINRKEV</sequence>
<comment type="function">
    <text evidence="1">DNA-dependent RNA polymerase catalyzes the transcription of DNA into RNA using the four ribonucleoside triphosphates as substrates.</text>
</comment>
<comment type="catalytic activity">
    <reaction evidence="1">
        <text>RNA(n) + a ribonucleoside 5'-triphosphate = RNA(n+1) + diphosphate</text>
        <dbReference type="Rhea" id="RHEA:21248"/>
        <dbReference type="Rhea" id="RHEA-COMP:14527"/>
        <dbReference type="Rhea" id="RHEA-COMP:17342"/>
        <dbReference type="ChEBI" id="CHEBI:33019"/>
        <dbReference type="ChEBI" id="CHEBI:61557"/>
        <dbReference type="ChEBI" id="CHEBI:140395"/>
        <dbReference type="EC" id="2.7.7.6"/>
    </reaction>
</comment>
<comment type="subunit">
    <text evidence="1">In plastids the minimal PEP RNA polymerase catalytic core is composed of four subunits: alpha, beta, beta', and beta''. When a (nuclear-encoded) sigma factor is associated with the core the holoenzyme is formed, which can initiate transcription.</text>
</comment>
<comment type="subcellular location">
    <subcellularLocation>
        <location>Plastid</location>
        <location>Chloroplast</location>
    </subcellularLocation>
</comment>
<comment type="similarity">
    <text evidence="1">Belongs to the RNA polymerase beta chain family.</text>
</comment>
<dbReference type="EC" id="2.7.7.6" evidence="1"/>
<dbReference type="EMBL" id="AP009369">
    <property type="protein sequence ID" value="BAF50015.1"/>
    <property type="molecule type" value="Genomic_DNA"/>
</dbReference>
<dbReference type="RefSeq" id="YP_001123191.1">
    <property type="nucleotide sequence ID" value="NC_009268.1"/>
</dbReference>
<dbReference type="SMR" id="A4QK10"/>
<dbReference type="GeneID" id="4962497"/>
<dbReference type="GO" id="GO:0009507">
    <property type="term" value="C:chloroplast"/>
    <property type="evidence" value="ECO:0007669"/>
    <property type="project" value="UniProtKB-SubCell"/>
</dbReference>
<dbReference type="GO" id="GO:0000428">
    <property type="term" value="C:DNA-directed RNA polymerase complex"/>
    <property type="evidence" value="ECO:0007669"/>
    <property type="project" value="UniProtKB-KW"/>
</dbReference>
<dbReference type="GO" id="GO:0005739">
    <property type="term" value="C:mitochondrion"/>
    <property type="evidence" value="ECO:0007669"/>
    <property type="project" value="GOC"/>
</dbReference>
<dbReference type="GO" id="GO:0003677">
    <property type="term" value="F:DNA binding"/>
    <property type="evidence" value="ECO:0007669"/>
    <property type="project" value="UniProtKB-UniRule"/>
</dbReference>
<dbReference type="GO" id="GO:0003899">
    <property type="term" value="F:DNA-directed RNA polymerase activity"/>
    <property type="evidence" value="ECO:0007669"/>
    <property type="project" value="UniProtKB-UniRule"/>
</dbReference>
<dbReference type="GO" id="GO:0032549">
    <property type="term" value="F:ribonucleoside binding"/>
    <property type="evidence" value="ECO:0007669"/>
    <property type="project" value="InterPro"/>
</dbReference>
<dbReference type="GO" id="GO:0006351">
    <property type="term" value="P:DNA-templated transcription"/>
    <property type="evidence" value="ECO:0007669"/>
    <property type="project" value="UniProtKB-UniRule"/>
</dbReference>
<dbReference type="CDD" id="cd00653">
    <property type="entry name" value="RNA_pol_B_RPB2"/>
    <property type="match status" value="1"/>
</dbReference>
<dbReference type="FunFam" id="2.40.50.150:FF:000006">
    <property type="entry name" value="DNA-directed RNA polymerase subunit beta"/>
    <property type="match status" value="1"/>
</dbReference>
<dbReference type="FunFam" id="3.90.1110.10:FF:000009">
    <property type="entry name" value="DNA-directed RNA polymerase subunit beta"/>
    <property type="match status" value="1"/>
</dbReference>
<dbReference type="Gene3D" id="2.40.50.100">
    <property type="match status" value="1"/>
</dbReference>
<dbReference type="Gene3D" id="2.40.50.150">
    <property type="match status" value="1"/>
</dbReference>
<dbReference type="Gene3D" id="3.90.1100.10">
    <property type="match status" value="1"/>
</dbReference>
<dbReference type="Gene3D" id="2.30.150.10">
    <property type="entry name" value="DNA-directed RNA polymerase, beta subunit, external 1 domain"/>
    <property type="match status" value="1"/>
</dbReference>
<dbReference type="Gene3D" id="2.40.270.10">
    <property type="entry name" value="DNA-directed RNA polymerase, subunit 2, domain 6"/>
    <property type="match status" value="2"/>
</dbReference>
<dbReference type="Gene3D" id="3.90.1800.10">
    <property type="entry name" value="RNA polymerase alpha subunit dimerisation domain"/>
    <property type="match status" value="1"/>
</dbReference>
<dbReference type="Gene3D" id="3.90.1110.10">
    <property type="entry name" value="RNA polymerase Rpb2, domain 2"/>
    <property type="match status" value="1"/>
</dbReference>
<dbReference type="HAMAP" id="MF_01321">
    <property type="entry name" value="RNApol_bact_RpoB"/>
    <property type="match status" value="1"/>
</dbReference>
<dbReference type="InterPro" id="IPR042107">
    <property type="entry name" value="DNA-dir_RNA_pol_bsu_ext_1_sf"/>
</dbReference>
<dbReference type="InterPro" id="IPR015712">
    <property type="entry name" value="DNA-dir_RNA_pol_su2"/>
</dbReference>
<dbReference type="InterPro" id="IPR007120">
    <property type="entry name" value="DNA-dir_RNAP_su2_dom"/>
</dbReference>
<dbReference type="InterPro" id="IPR037033">
    <property type="entry name" value="DNA-dir_RNAP_su2_hyb_sf"/>
</dbReference>
<dbReference type="InterPro" id="IPR010243">
    <property type="entry name" value="RNA_pol_bsu_bac"/>
</dbReference>
<dbReference type="InterPro" id="IPR007121">
    <property type="entry name" value="RNA_pol_bsu_CS"/>
</dbReference>
<dbReference type="InterPro" id="IPR007642">
    <property type="entry name" value="RNA_pol_Rpb2_2"/>
</dbReference>
<dbReference type="InterPro" id="IPR037034">
    <property type="entry name" value="RNA_pol_Rpb2_2_sf"/>
</dbReference>
<dbReference type="InterPro" id="IPR007645">
    <property type="entry name" value="RNA_pol_Rpb2_3"/>
</dbReference>
<dbReference type="InterPro" id="IPR007641">
    <property type="entry name" value="RNA_pol_Rpb2_7"/>
</dbReference>
<dbReference type="InterPro" id="IPR014724">
    <property type="entry name" value="RNA_pol_RPB2_OB-fold"/>
</dbReference>
<dbReference type="NCBIfam" id="NF001616">
    <property type="entry name" value="PRK00405.1"/>
    <property type="match status" value="1"/>
</dbReference>
<dbReference type="PANTHER" id="PTHR20856">
    <property type="entry name" value="DNA-DIRECTED RNA POLYMERASE I SUBUNIT 2"/>
    <property type="match status" value="1"/>
</dbReference>
<dbReference type="Pfam" id="PF04561">
    <property type="entry name" value="RNA_pol_Rpb2_2"/>
    <property type="match status" value="1"/>
</dbReference>
<dbReference type="Pfam" id="PF04565">
    <property type="entry name" value="RNA_pol_Rpb2_3"/>
    <property type="match status" value="1"/>
</dbReference>
<dbReference type="Pfam" id="PF00562">
    <property type="entry name" value="RNA_pol_Rpb2_6"/>
    <property type="match status" value="1"/>
</dbReference>
<dbReference type="Pfam" id="PF04560">
    <property type="entry name" value="RNA_pol_Rpb2_7"/>
    <property type="match status" value="1"/>
</dbReference>
<dbReference type="SUPFAM" id="SSF64484">
    <property type="entry name" value="beta and beta-prime subunits of DNA dependent RNA-polymerase"/>
    <property type="match status" value="1"/>
</dbReference>
<dbReference type="PROSITE" id="PS01166">
    <property type="entry name" value="RNA_POL_BETA"/>
    <property type="match status" value="1"/>
</dbReference>
<gene>
    <name evidence="1" type="primary">rpoB</name>
</gene>